<accession>Q12EE6</accession>
<dbReference type="EC" id="2.1.3.2" evidence="1"/>
<dbReference type="EMBL" id="CP000316">
    <property type="protein sequence ID" value="ABE43096.1"/>
    <property type="molecule type" value="Genomic_DNA"/>
</dbReference>
<dbReference type="RefSeq" id="WP_011482097.1">
    <property type="nucleotide sequence ID" value="NC_007948.1"/>
</dbReference>
<dbReference type="SMR" id="Q12EE6"/>
<dbReference type="STRING" id="296591.Bpro_1145"/>
<dbReference type="KEGG" id="pol:Bpro_1145"/>
<dbReference type="eggNOG" id="COG0540">
    <property type="taxonomic scope" value="Bacteria"/>
</dbReference>
<dbReference type="HOGENOM" id="CLU_043846_2_0_4"/>
<dbReference type="OrthoDB" id="9774690at2"/>
<dbReference type="UniPathway" id="UPA00070">
    <property type="reaction ID" value="UER00116"/>
</dbReference>
<dbReference type="Proteomes" id="UP000001983">
    <property type="component" value="Chromosome"/>
</dbReference>
<dbReference type="GO" id="GO:0005829">
    <property type="term" value="C:cytosol"/>
    <property type="evidence" value="ECO:0007669"/>
    <property type="project" value="TreeGrafter"/>
</dbReference>
<dbReference type="GO" id="GO:0016597">
    <property type="term" value="F:amino acid binding"/>
    <property type="evidence" value="ECO:0007669"/>
    <property type="project" value="InterPro"/>
</dbReference>
<dbReference type="GO" id="GO:0004070">
    <property type="term" value="F:aspartate carbamoyltransferase activity"/>
    <property type="evidence" value="ECO:0007669"/>
    <property type="project" value="UniProtKB-UniRule"/>
</dbReference>
<dbReference type="GO" id="GO:0006207">
    <property type="term" value="P:'de novo' pyrimidine nucleobase biosynthetic process"/>
    <property type="evidence" value="ECO:0007669"/>
    <property type="project" value="InterPro"/>
</dbReference>
<dbReference type="GO" id="GO:0044205">
    <property type="term" value="P:'de novo' UMP biosynthetic process"/>
    <property type="evidence" value="ECO:0007669"/>
    <property type="project" value="UniProtKB-UniRule"/>
</dbReference>
<dbReference type="GO" id="GO:0006520">
    <property type="term" value="P:amino acid metabolic process"/>
    <property type="evidence" value="ECO:0007669"/>
    <property type="project" value="InterPro"/>
</dbReference>
<dbReference type="FunFam" id="3.40.50.1370:FF:000007">
    <property type="entry name" value="Aspartate carbamoyltransferase"/>
    <property type="match status" value="1"/>
</dbReference>
<dbReference type="Gene3D" id="3.40.50.1370">
    <property type="entry name" value="Aspartate/ornithine carbamoyltransferase"/>
    <property type="match status" value="2"/>
</dbReference>
<dbReference type="HAMAP" id="MF_00001">
    <property type="entry name" value="Asp_carb_tr"/>
    <property type="match status" value="1"/>
</dbReference>
<dbReference type="InterPro" id="IPR006132">
    <property type="entry name" value="Asp/Orn_carbamoyltranf_P-bd"/>
</dbReference>
<dbReference type="InterPro" id="IPR006130">
    <property type="entry name" value="Asp/Orn_carbamoylTrfase"/>
</dbReference>
<dbReference type="InterPro" id="IPR036901">
    <property type="entry name" value="Asp/Orn_carbamoylTrfase_sf"/>
</dbReference>
<dbReference type="InterPro" id="IPR002082">
    <property type="entry name" value="Asp_carbamoyltransf"/>
</dbReference>
<dbReference type="InterPro" id="IPR006131">
    <property type="entry name" value="Asp_carbamoyltransf_Asp/Orn-bd"/>
</dbReference>
<dbReference type="NCBIfam" id="TIGR00670">
    <property type="entry name" value="asp_carb_tr"/>
    <property type="match status" value="1"/>
</dbReference>
<dbReference type="NCBIfam" id="NF002032">
    <property type="entry name" value="PRK00856.1"/>
    <property type="match status" value="1"/>
</dbReference>
<dbReference type="PANTHER" id="PTHR45753:SF6">
    <property type="entry name" value="ASPARTATE CARBAMOYLTRANSFERASE"/>
    <property type="match status" value="1"/>
</dbReference>
<dbReference type="PANTHER" id="PTHR45753">
    <property type="entry name" value="ORNITHINE CARBAMOYLTRANSFERASE, MITOCHONDRIAL"/>
    <property type="match status" value="1"/>
</dbReference>
<dbReference type="Pfam" id="PF00185">
    <property type="entry name" value="OTCace"/>
    <property type="match status" value="1"/>
</dbReference>
<dbReference type="Pfam" id="PF02729">
    <property type="entry name" value="OTCace_N"/>
    <property type="match status" value="1"/>
</dbReference>
<dbReference type="PRINTS" id="PR00100">
    <property type="entry name" value="AOTCASE"/>
</dbReference>
<dbReference type="PRINTS" id="PR00101">
    <property type="entry name" value="ATCASE"/>
</dbReference>
<dbReference type="SUPFAM" id="SSF53671">
    <property type="entry name" value="Aspartate/ornithine carbamoyltransferase"/>
    <property type="match status" value="1"/>
</dbReference>
<dbReference type="PROSITE" id="PS00097">
    <property type="entry name" value="CARBAMOYLTRANSFERASE"/>
    <property type="match status" value="1"/>
</dbReference>
<protein>
    <recommendedName>
        <fullName evidence="1">Aspartate carbamoyltransferase catalytic subunit</fullName>
        <ecNumber evidence="1">2.1.3.2</ecNumber>
    </recommendedName>
    <alternativeName>
        <fullName evidence="1">Aspartate transcarbamylase</fullName>
        <shortName evidence="1">ATCase</shortName>
    </alternativeName>
</protein>
<feature type="chain" id="PRO_0000321135" description="Aspartate carbamoyltransferase catalytic subunit">
    <location>
        <begin position="1"/>
        <end position="320"/>
    </location>
</feature>
<feature type="binding site" evidence="1">
    <location>
        <position position="68"/>
    </location>
    <ligand>
        <name>carbamoyl phosphate</name>
        <dbReference type="ChEBI" id="CHEBI:58228"/>
    </ligand>
</feature>
<feature type="binding site" evidence="1">
    <location>
        <position position="69"/>
    </location>
    <ligand>
        <name>carbamoyl phosphate</name>
        <dbReference type="ChEBI" id="CHEBI:58228"/>
    </ligand>
</feature>
<feature type="binding site" evidence="1">
    <location>
        <position position="96"/>
    </location>
    <ligand>
        <name>L-aspartate</name>
        <dbReference type="ChEBI" id="CHEBI:29991"/>
    </ligand>
</feature>
<feature type="binding site" evidence="1">
    <location>
        <position position="118"/>
    </location>
    <ligand>
        <name>carbamoyl phosphate</name>
        <dbReference type="ChEBI" id="CHEBI:58228"/>
    </ligand>
</feature>
<feature type="binding site" evidence="1">
    <location>
        <position position="148"/>
    </location>
    <ligand>
        <name>carbamoyl phosphate</name>
        <dbReference type="ChEBI" id="CHEBI:58228"/>
    </ligand>
</feature>
<feature type="binding site" evidence="1">
    <location>
        <position position="151"/>
    </location>
    <ligand>
        <name>carbamoyl phosphate</name>
        <dbReference type="ChEBI" id="CHEBI:58228"/>
    </ligand>
</feature>
<feature type="binding site" evidence="1">
    <location>
        <position position="181"/>
    </location>
    <ligand>
        <name>L-aspartate</name>
        <dbReference type="ChEBI" id="CHEBI:29991"/>
    </ligand>
</feature>
<feature type="binding site" evidence="1">
    <location>
        <position position="236"/>
    </location>
    <ligand>
        <name>L-aspartate</name>
        <dbReference type="ChEBI" id="CHEBI:29991"/>
    </ligand>
</feature>
<feature type="binding site" evidence="1">
    <location>
        <position position="277"/>
    </location>
    <ligand>
        <name>carbamoyl phosphate</name>
        <dbReference type="ChEBI" id="CHEBI:58228"/>
    </ligand>
</feature>
<feature type="binding site" evidence="1">
    <location>
        <position position="278"/>
    </location>
    <ligand>
        <name>carbamoyl phosphate</name>
        <dbReference type="ChEBI" id="CHEBI:58228"/>
    </ligand>
</feature>
<proteinExistence type="inferred from homology"/>
<comment type="function">
    <text evidence="1">Catalyzes the condensation of carbamoyl phosphate and aspartate to form carbamoyl aspartate and inorganic phosphate, the committed step in the de novo pyrimidine nucleotide biosynthesis pathway.</text>
</comment>
<comment type="catalytic activity">
    <reaction evidence="1">
        <text>carbamoyl phosphate + L-aspartate = N-carbamoyl-L-aspartate + phosphate + H(+)</text>
        <dbReference type="Rhea" id="RHEA:20013"/>
        <dbReference type="ChEBI" id="CHEBI:15378"/>
        <dbReference type="ChEBI" id="CHEBI:29991"/>
        <dbReference type="ChEBI" id="CHEBI:32814"/>
        <dbReference type="ChEBI" id="CHEBI:43474"/>
        <dbReference type="ChEBI" id="CHEBI:58228"/>
        <dbReference type="EC" id="2.1.3.2"/>
    </reaction>
</comment>
<comment type="pathway">
    <text evidence="1">Pyrimidine metabolism; UMP biosynthesis via de novo pathway; (S)-dihydroorotate from bicarbonate: step 2/3.</text>
</comment>
<comment type="subunit">
    <text evidence="1">Heterododecamer (2C3:3R2) of six catalytic PyrB chains organized as two trimers (C3), and six regulatory PyrI chains organized as three dimers (R2).</text>
</comment>
<comment type="similarity">
    <text evidence="1">Belongs to the aspartate/ornithine carbamoyltransferase superfamily. ATCase family.</text>
</comment>
<sequence>MLYRRNPQLNKNGELIHLLSIEGLPKAILTQILDTAANFVSVNNREVKKVPLLRGKSVFNLFFENSTRTRTTFEIAATRLSADVINLDIARSSASKGESLLDTIANLSAMAADLFVVRHGESGAPYLIAQHVAPHVHVINAGDGRHAHPTQGLLDMYTIRHYKKDFSNLTVAIVGDVLHSRVARSDIHALTTLGCPEVRVVGPKTLVPADMAQMGVRVCNTLEEGIKGADVIIMLRLQNERMSGALLPSSQEFFKSFGLTNEKLQLAKPDAIVMHPGPINRGVEIDSAVVDGTQSVILPQVTFGIAVRMAVMGIVAGNEA</sequence>
<organism>
    <name type="scientific">Polaromonas sp. (strain JS666 / ATCC BAA-500)</name>
    <dbReference type="NCBI Taxonomy" id="296591"/>
    <lineage>
        <taxon>Bacteria</taxon>
        <taxon>Pseudomonadati</taxon>
        <taxon>Pseudomonadota</taxon>
        <taxon>Betaproteobacteria</taxon>
        <taxon>Burkholderiales</taxon>
        <taxon>Comamonadaceae</taxon>
        <taxon>Polaromonas</taxon>
    </lineage>
</organism>
<name>PYRB_POLSJ</name>
<keyword id="KW-0665">Pyrimidine biosynthesis</keyword>
<keyword id="KW-1185">Reference proteome</keyword>
<keyword id="KW-0808">Transferase</keyword>
<evidence type="ECO:0000255" key="1">
    <source>
        <dbReference type="HAMAP-Rule" id="MF_00001"/>
    </source>
</evidence>
<gene>
    <name evidence="1" type="primary">pyrB</name>
    <name type="ordered locus">Bpro_1145</name>
</gene>
<reference key="1">
    <citation type="journal article" date="2008" name="Appl. Environ. Microbiol.">
        <title>The genome of Polaromonas sp. strain JS666: insights into the evolution of a hydrocarbon- and xenobiotic-degrading bacterium, and features of relevance to biotechnology.</title>
        <authorList>
            <person name="Mattes T.E."/>
            <person name="Alexander A.K."/>
            <person name="Richardson P.M."/>
            <person name="Munk A.C."/>
            <person name="Han C.S."/>
            <person name="Stothard P."/>
            <person name="Coleman N.V."/>
        </authorList>
    </citation>
    <scope>NUCLEOTIDE SEQUENCE [LARGE SCALE GENOMIC DNA]</scope>
    <source>
        <strain>JS666 / ATCC BAA-500</strain>
    </source>
</reference>